<protein>
    <recommendedName>
        <fullName evidence="1">ATP phosphoribosyltransferase regulatory subunit</fullName>
    </recommendedName>
</protein>
<feature type="chain" id="PRO_1000095453" description="ATP phosphoribosyltransferase regulatory subunit">
    <location>
        <begin position="1"/>
        <end position="383"/>
    </location>
</feature>
<keyword id="KW-0028">Amino-acid biosynthesis</keyword>
<keyword id="KW-0963">Cytoplasm</keyword>
<keyword id="KW-0368">Histidine biosynthesis</keyword>
<comment type="function">
    <text evidence="1">Required for the first step of histidine biosynthesis. May allow the feedback regulation of ATP phosphoribosyltransferase activity by histidine.</text>
</comment>
<comment type="pathway">
    <text evidence="1">Amino-acid biosynthesis; L-histidine biosynthesis; L-histidine from 5-phospho-alpha-D-ribose 1-diphosphate: step 1/9.</text>
</comment>
<comment type="subunit">
    <text evidence="1">Heteromultimer composed of HisG and HisZ subunits.</text>
</comment>
<comment type="subcellular location">
    <subcellularLocation>
        <location evidence="1">Cytoplasm</location>
    </subcellularLocation>
</comment>
<comment type="miscellaneous">
    <text>This function is generally fulfilled by the C-terminal part of HisG, which is missing in some bacteria such as this one.</text>
</comment>
<comment type="similarity">
    <text evidence="1">Belongs to the class-II aminoacyl-tRNA synthetase family. HisZ subfamily.</text>
</comment>
<accession>B2SXS0</accession>
<organism>
    <name type="scientific">Paraburkholderia phytofirmans (strain DSM 17436 / LMG 22146 / PsJN)</name>
    <name type="common">Burkholderia phytofirmans</name>
    <dbReference type="NCBI Taxonomy" id="398527"/>
    <lineage>
        <taxon>Bacteria</taxon>
        <taxon>Pseudomonadati</taxon>
        <taxon>Pseudomonadota</taxon>
        <taxon>Betaproteobacteria</taxon>
        <taxon>Burkholderiales</taxon>
        <taxon>Burkholderiaceae</taxon>
        <taxon>Paraburkholderia</taxon>
    </lineage>
</organism>
<sequence length="383" mass="41786">MSTWLLPENIADVLPSEARKIEELRRHLLDRFRSYGYEMVMPPLLEYIESLLTGGGHDLNLRTFKLVDQLSGRTLGLRADITPQVARIDAHLLNRQGVTRLCYAGNVAHTRPRGLHATREQIQIGAEIYGHAGLEADLEIQQLMLDALRLAGLAKVRLDLCHAGVLAALIEAEPAAAELGQSLYDALAGKDVPRLVELTANLTPVIRDALRALPTLYGDASVLDEARARLPNAPAIARALDDLAFLASQVEGAEVMIDLADLRGYAYHSGVMFSAYVDGVPNAVARGGRYDHVGQAYGRARAATGFSLDLREVARISPVEARSSAILAPWQHDEALRVSVAALRDAGEVVIQALPGHEHDLDEFAFDRVLVERNGNWVVEARA</sequence>
<evidence type="ECO:0000255" key="1">
    <source>
        <dbReference type="HAMAP-Rule" id="MF_00125"/>
    </source>
</evidence>
<dbReference type="EMBL" id="CP001052">
    <property type="protein sequence ID" value="ACD16926.1"/>
    <property type="molecule type" value="Genomic_DNA"/>
</dbReference>
<dbReference type="RefSeq" id="WP_012433521.1">
    <property type="nucleotide sequence ID" value="NC_010681.1"/>
</dbReference>
<dbReference type="SMR" id="B2SXS0"/>
<dbReference type="STRING" id="398527.Bphyt_2531"/>
<dbReference type="KEGG" id="bpy:Bphyt_2531"/>
<dbReference type="eggNOG" id="COG3705">
    <property type="taxonomic scope" value="Bacteria"/>
</dbReference>
<dbReference type="HOGENOM" id="CLU_025113_0_1_4"/>
<dbReference type="OrthoDB" id="9769617at2"/>
<dbReference type="UniPathway" id="UPA00031">
    <property type="reaction ID" value="UER00006"/>
</dbReference>
<dbReference type="Proteomes" id="UP000001739">
    <property type="component" value="Chromosome 1"/>
</dbReference>
<dbReference type="GO" id="GO:0005737">
    <property type="term" value="C:cytoplasm"/>
    <property type="evidence" value="ECO:0007669"/>
    <property type="project" value="UniProtKB-SubCell"/>
</dbReference>
<dbReference type="GO" id="GO:0004821">
    <property type="term" value="F:histidine-tRNA ligase activity"/>
    <property type="evidence" value="ECO:0007669"/>
    <property type="project" value="TreeGrafter"/>
</dbReference>
<dbReference type="GO" id="GO:0006427">
    <property type="term" value="P:histidyl-tRNA aminoacylation"/>
    <property type="evidence" value="ECO:0007669"/>
    <property type="project" value="TreeGrafter"/>
</dbReference>
<dbReference type="GO" id="GO:0000105">
    <property type="term" value="P:L-histidine biosynthetic process"/>
    <property type="evidence" value="ECO:0007669"/>
    <property type="project" value="UniProtKB-UniRule"/>
</dbReference>
<dbReference type="CDD" id="cd00773">
    <property type="entry name" value="HisRS-like_core"/>
    <property type="match status" value="1"/>
</dbReference>
<dbReference type="Gene3D" id="3.30.930.10">
    <property type="entry name" value="Bira Bifunctional Protein, Domain 2"/>
    <property type="match status" value="1"/>
</dbReference>
<dbReference type="HAMAP" id="MF_00125">
    <property type="entry name" value="HisZ"/>
    <property type="match status" value="1"/>
</dbReference>
<dbReference type="InterPro" id="IPR045864">
    <property type="entry name" value="aa-tRNA-synth_II/BPL/LPL"/>
</dbReference>
<dbReference type="InterPro" id="IPR041715">
    <property type="entry name" value="HisRS-like_core"/>
</dbReference>
<dbReference type="InterPro" id="IPR004516">
    <property type="entry name" value="HisRS/HisZ"/>
</dbReference>
<dbReference type="InterPro" id="IPR004517">
    <property type="entry name" value="HisZ"/>
</dbReference>
<dbReference type="NCBIfam" id="TIGR00443">
    <property type="entry name" value="hisZ_biosyn_reg"/>
    <property type="match status" value="1"/>
</dbReference>
<dbReference type="NCBIfam" id="NF008935">
    <property type="entry name" value="PRK12292.1-1"/>
    <property type="match status" value="1"/>
</dbReference>
<dbReference type="NCBIfam" id="NF009086">
    <property type="entry name" value="PRK12421.1"/>
    <property type="match status" value="1"/>
</dbReference>
<dbReference type="PANTHER" id="PTHR43707:SF1">
    <property type="entry name" value="HISTIDINE--TRNA LIGASE, MITOCHONDRIAL-RELATED"/>
    <property type="match status" value="1"/>
</dbReference>
<dbReference type="PANTHER" id="PTHR43707">
    <property type="entry name" value="HISTIDYL-TRNA SYNTHETASE"/>
    <property type="match status" value="1"/>
</dbReference>
<dbReference type="Pfam" id="PF13393">
    <property type="entry name" value="tRNA-synt_His"/>
    <property type="match status" value="1"/>
</dbReference>
<dbReference type="SUPFAM" id="SSF55681">
    <property type="entry name" value="Class II aaRS and biotin synthetases"/>
    <property type="match status" value="1"/>
</dbReference>
<name>HISZ_PARPJ</name>
<reference key="1">
    <citation type="journal article" date="2011" name="J. Bacteriol.">
        <title>Complete genome sequence of the plant growth-promoting endophyte Burkholderia phytofirmans strain PsJN.</title>
        <authorList>
            <person name="Weilharter A."/>
            <person name="Mitter B."/>
            <person name="Shin M.V."/>
            <person name="Chain P.S."/>
            <person name="Nowak J."/>
            <person name="Sessitsch A."/>
        </authorList>
    </citation>
    <scope>NUCLEOTIDE SEQUENCE [LARGE SCALE GENOMIC DNA]</scope>
    <source>
        <strain>DSM 17436 / LMG 22146 / PsJN</strain>
    </source>
</reference>
<proteinExistence type="inferred from homology"/>
<gene>
    <name evidence="1" type="primary">hisZ</name>
    <name type="ordered locus">Bphyt_2531</name>
</gene>